<accession>A9VQF0</accession>
<evidence type="ECO:0000255" key="1">
    <source>
        <dbReference type="HAMAP-Rule" id="MF_00101"/>
    </source>
</evidence>
<sequence length="119" mass="13182">MIVGIGIDIIELNRIEKMLDGKLKFMERILTERERGVAEGLKGSRLTEFVAGRFAAKEAYSKAVGTGIGKEVSFLDIEVRNDDRGKPIIITNTEHIVHLSISHSKEFAVAQVVLESSSR</sequence>
<reference key="1">
    <citation type="journal article" date="2008" name="Chem. Biol. Interact.">
        <title>Extending the Bacillus cereus group genomics to putative food-borne pathogens of different toxicity.</title>
        <authorList>
            <person name="Lapidus A."/>
            <person name="Goltsman E."/>
            <person name="Auger S."/>
            <person name="Galleron N."/>
            <person name="Segurens B."/>
            <person name="Dossat C."/>
            <person name="Land M.L."/>
            <person name="Broussolle V."/>
            <person name="Brillard J."/>
            <person name="Guinebretiere M.-H."/>
            <person name="Sanchis V."/>
            <person name="Nguen-the C."/>
            <person name="Lereclus D."/>
            <person name="Richardson P."/>
            <person name="Wincker P."/>
            <person name="Weissenbach J."/>
            <person name="Ehrlich S.D."/>
            <person name="Sorokin A."/>
        </authorList>
    </citation>
    <scope>NUCLEOTIDE SEQUENCE [LARGE SCALE GENOMIC DNA]</scope>
    <source>
        <strain>KBAB4</strain>
    </source>
</reference>
<proteinExistence type="inferred from homology"/>
<feature type="chain" id="PRO_1000093854" description="Holo-[acyl-carrier-protein] synthase">
    <location>
        <begin position="1"/>
        <end position="119"/>
    </location>
</feature>
<feature type="binding site" evidence="1">
    <location>
        <position position="8"/>
    </location>
    <ligand>
        <name>Mg(2+)</name>
        <dbReference type="ChEBI" id="CHEBI:18420"/>
    </ligand>
</feature>
<feature type="binding site" evidence="1">
    <location>
        <position position="58"/>
    </location>
    <ligand>
        <name>Mg(2+)</name>
        <dbReference type="ChEBI" id="CHEBI:18420"/>
    </ligand>
</feature>
<name>ACPS_BACMK</name>
<keyword id="KW-0963">Cytoplasm</keyword>
<keyword id="KW-0275">Fatty acid biosynthesis</keyword>
<keyword id="KW-0276">Fatty acid metabolism</keyword>
<keyword id="KW-0444">Lipid biosynthesis</keyword>
<keyword id="KW-0443">Lipid metabolism</keyword>
<keyword id="KW-0460">Magnesium</keyword>
<keyword id="KW-0479">Metal-binding</keyword>
<keyword id="KW-0808">Transferase</keyword>
<gene>
    <name evidence="1" type="primary">acpS</name>
    <name type="ordered locus">BcerKBAB4_0228</name>
</gene>
<comment type="function">
    <text evidence="1">Transfers the 4'-phosphopantetheine moiety from coenzyme A to a Ser of acyl-carrier-protein.</text>
</comment>
<comment type="catalytic activity">
    <reaction evidence="1">
        <text>apo-[ACP] + CoA = holo-[ACP] + adenosine 3',5'-bisphosphate + H(+)</text>
        <dbReference type="Rhea" id="RHEA:12068"/>
        <dbReference type="Rhea" id="RHEA-COMP:9685"/>
        <dbReference type="Rhea" id="RHEA-COMP:9690"/>
        <dbReference type="ChEBI" id="CHEBI:15378"/>
        <dbReference type="ChEBI" id="CHEBI:29999"/>
        <dbReference type="ChEBI" id="CHEBI:57287"/>
        <dbReference type="ChEBI" id="CHEBI:58343"/>
        <dbReference type="ChEBI" id="CHEBI:64479"/>
        <dbReference type="EC" id="2.7.8.7"/>
    </reaction>
</comment>
<comment type="cofactor">
    <cofactor evidence="1">
        <name>Mg(2+)</name>
        <dbReference type="ChEBI" id="CHEBI:18420"/>
    </cofactor>
</comment>
<comment type="subcellular location">
    <subcellularLocation>
        <location evidence="1">Cytoplasm</location>
    </subcellularLocation>
</comment>
<comment type="similarity">
    <text evidence="1">Belongs to the P-Pant transferase superfamily. AcpS family.</text>
</comment>
<organism>
    <name type="scientific">Bacillus mycoides (strain KBAB4)</name>
    <name type="common">Bacillus weihenstephanensis</name>
    <dbReference type="NCBI Taxonomy" id="315730"/>
    <lineage>
        <taxon>Bacteria</taxon>
        <taxon>Bacillati</taxon>
        <taxon>Bacillota</taxon>
        <taxon>Bacilli</taxon>
        <taxon>Bacillales</taxon>
        <taxon>Bacillaceae</taxon>
        <taxon>Bacillus</taxon>
        <taxon>Bacillus cereus group</taxon>
    </lineage>
</organism>
<protein>
    <recommendedName>
        <fullName evidence="1">Holo-[acyl-carrier-protein] synthase</fullName>
        <shortName evidence="1">Holo-ACP synthase</shortName>
        <ecNumber evidence="1">2.7.8.7</ecNumber>
    </recommendedName>
    <alternativeName>
        <fullName evidence="1">4'-phosphopantetheinyl transferase AcpS</fullName>
    </alternativeName>
</protein>
<dbReference type="EC" id="2.7.8.7" evidence="1"/>
<dbReference type="EMBL" id="CP000903">
    <property type="protein sequence ID" value="ABY41496.1"/>
    <property type="molecule type" value="Genomic_DNA"/>
</dbReference>
<dbReference type="RefSeq" id="WP_002009969.1">
    <property type="nucleotide sequence ID" value="NC_010184.1"/>
</dbReference>
<dbReference type="SMR" id="A9VQF0"/>
<dbReference type="KEGG" id="bwe:BcerKBAB4_0228"/>
<dbReference type="eggNOG" id="COG0736">
    <property type="taxonomic scope" value="Bacteria"/>
</dbReference>
<dbReference type="HOGENOM" id="CLU_089696_1_2_9"/>
<dbReference type="Proteomes" id="UP000002154">
    <property type="component" value="Chromosome"/>
</dbReference>
<dbReference type="GO" id="GO:0005829">
    <property type="term" value="C:cytosol"/>
    <property type="evidence" value="ECO:0007669"/>
    <property type="project" value="TreeGrafter"/>
</dbReference>
<dbReference type="GO" id="GO:0008897">
    <property type="term" value="F:holo-[acyl-carrier-protein] synthase activity"/>
    <property type="evidence" value="ECO:0007669"/>
    <property type="project" value="UniProtKB-UniRule"/>
</dbReference>
<dbReference type="GO" id="GO:0000287">
    <property type="term" value="F:magnesium ion binding"/>
    <property type="evidence" value="ECO:0007669"/>
    <property type="project" value="UniProtKB-UniRule"/>
</dbReference>
<dbReference type="GO" id="GO:0006633">
    <property type="term" value="P:fatty acid biosynthetic process"/>
    <property type="evidence" value="ECO:0007669"/>
    <property type="project" value="UniProtKB-UniRule"/>
</dbReference>
<dbReference type="GO" id="GO:0019878">
    <property type="term" value="P:lysine biosynthetic process via aminoadipic acid"/>
    <property type="evidence" value="ECO:0007669"/>
    <property type="project" value="TreeGrafter"/>
</dbReference>
<dbReference type="Gene3D" id="3.90.470.20">
    <property type="entry name" value="4'-phosphopantetheinyl transferase domain"/>
    <property type="match status" value="1"/>
</dbReference>
<dbReference type="HAMAP" id="MF_00101">
    <property type="entry name" value="AcpS"/>
    <property type="match status" value="1"/>
</dbReference>
<dbReference type="InterPro" id="IPR008278">
    <property type="entry name" value="4-PPantetheinyl_Trfase_dom"/>
</dbReference>
<dbReference type="InterPro" id="IPR037143">
    <property type="entry name" value="4-PPantetheinyl_Trfase_dom_sf"/>
</dbReference>
<dbReference type="InterPro" id="IPR002582">
    <property type="entry name" value="ACPS"/>
</dbReference>
<dbReference type="InterPro" id="IPR050559">
    <property type="entry name" value="P-Pant_transferase_sf"/>
</dbReference>
<dbReference type="InterPro" id="IPR004568">
    <property type="entry name" value="Ppantetheine-prot_Trfase_dom"/>
</dbReference>
<dbReference type="NCBIfam" id="TIGR00516">
    <property type="entry name" value="acpS"/>
    <property type="match status" value="1"/>
</dbReference>
<dbReference type="NCBIfam" id="TIGR00556">
    <property type="entry name" value="pantethn_trn"/>
    <property type="match status" value="1"/>
</dbReference>
<dbReference type="PANTHER" id="PTHR12215:SF10">
    <property type="entry name" value="L-AMINOADIPATE-SEMIALDEHYDE DEHYDROGENASE-PHOSPHOPANTETHEINYL TRANSFERASE"/>
    <property type="match status" value="1"/>
</dbReference>
<dbReference type="PANTHER" id="PTHR12215">
    <property type="entry name" value="PHOSPHOPANTETHEINE TRANSFERASE"/>
    <property type="match status" value="1"/>
</dbReference>
<dbReference type="Pfam" id="PF01648">
    <property type="entry name" value="ACPS"/>
    <property type="match status" value="1"/>
</dbReference>
<dbReference type="SUPFAM" id="SSF56214">
    <property type="entry name" value="4'-phosphopantetheinyl transferase"/>
    <property type="match status" value="1"/>
</dbReference>